<protein>
    <recommendedName>
        <fullName evidence="1">3-isopropylmalate dehydratase small subunit</fullName>
        <ecNumber evidence="1">4.2.1.33</ecNumber>
    </recommendedName>
    <alternativeName>
        <fullName evidence="1">Alpha-IPM isomerase</fullName>
        <shortName evidence="1">IPMI</shortName>
    </alternativeName>
    <alternativeName>
        <fullName evidence="1">Isopropylmalate isomerase</fullName>
    </alternativeName>
</protein>
<feature type="chain" id="PRO_0000141930" description="3-isopropylmalate dehydratase small subunit">
    <location>
        <begin position="1"/>
        <end position="167"/>
    </location>
</feature>
<evidence type="ECO:0000255" key="1">
    <source>
        <dbReference type="HAMAP-Rule" id="MF_01032"/>
    </source>
</evidence>
<name>LEUD_WOLSU</name>
<keyword id="KW-0028">Amino-acid biosynthesis</keyword>
<keyword id="KW-0100">Branched-chain amino acid biosynthesis</keyword>
<keyword id="KW-0432">Leucine biosynthesis</keyword>
<keyword id="KW-0456">Lyase</keyword>
<keyword id="KW-1185">Reference proteome</keyword>
<sequence>MNIQQGKVWKFGENIDTDLIIAARYLNTSDPQVLASHVMEDARPDFLQHFTKGDFIVAGENFGCGSSREHAPVALKTAGVSAVIAKSFARIFYRNSFNTGLPILEVKETDEIREGDTLEVDMAQGTIKNLTRNQTYAFKPIPPFMMELLESGGLIEHAKAKIAQGVL</sequence>
<dbReference type="EC" id="4.2.1.33" evidence="1"/>
<dbReference type="EMBL" id="BX571661">
    <property type="protein sequence ID" value="CAE10828.1"/>
    <property type="molecule type" value="Genomic_DNA"/>
</dbReference>
<dbReference type="RefSeq" id="WP_011139611.1">
    <property type="nucleotide sequence ID" value="NC_005090.1"/>
</dbReference>
<dbReference type="SMR" id="Q7M887"/>
<dbReference type="STRING" id="273121.WS1812"/>
<dbReference type="KEGG" id="wsu:WS1812"/>
<dbReference type="eggNOG" id="COG0066">
    <property type="taxonomic scope" value="Bacteria"/>
</dbReference>
<dbReference type="HOGENOM" id="CLU_081378_1_1_7"/>
<dbReference type="UniPathway" id="UPA00048">
    <property type="reaction ID" value="UER00071"/>
</dbReference>
<dbReference type="Proteomes" id="UP000000422">
    <property type="component" value="Chromosome"/>
</dbReference>
<dbReference type="GO" id="GO:0003861">
    <property type="term" value="F:3-isopropylmalate dehydratase activity"/>
    <property type="evidence" value="ECO:0007669"/>
    <property type="project" value="UniProtKB-UniRule"/>
</dbReference>
<dbReference type="GO" id="GO:0009098">
    <property type="term" value="P:L-leucine biosynthetic process"/>
    <property type="evidence" value="ECO:0007669"/>
    <property type="project" value="UniProtKB-UniRule"/>
</dbReference>
<dbReference type="CDD" id="cd01577">
    <property type="entry name" value="IPMI_Swivel"/>
    <property type="match status" value="1"/>
</dbReference>
<dbReference type="Gene3D" id="3.20.19.10">
    <property type="entry name" value="Aconitase, domain 4"/>
    <property type="match status" value="1"/>
</dbReference>
<dbReference type="HAMAP" id="MF_01032">
    <property type="entry name" value="LeuD_type2"/>
    <property type="match status" value="1"/>
</dbReference>
<dbReference type="InterPro" id="IPR015928">
    <property type="entry name" value="Aconitase/3IPM_dehydase_swvl"/>
</dbReference>
<dbReference type="InterPro" id="IPR000573">
    <property type="entry name" value="AconitaseA/IPMdHydase_ssu_swvl"/>
</dbReference>
<dbReference type="InterPro" id="IPR033940">
    <property type="entry name" value="IPMI_Swivel"/>
</dbReference>
<dbReference type="InterPro" id="IPR050075">
    <property type="entry name" value="LeuD"/>
</dbReference>
<dbReference type="InterPro" id="IPR011827">
    <property type="entry name" value="LeuD_type2/HacB/DmdB"/>
</dbReference>
<dbReference type="NCBIfam" id="TIGR02087">
    <property type="entry name" value="LEUD_arch"/>
    <property type="match status" value="1"/>
</dbReference>
<dbReference type="PANTHER" id="PTHR43345:SF2">
    <property type="entry name" value="3-ISOPROPYLMALATE DEHYDRATASE SMALL SUBUNIT 1"/>
    <property type="match status" value="1"/>
</dbReference>
<dbReference type="PANTHER" id="PTHR43345">
    <property type="entry name" value="3-ISOPROPYLMALATE DEHYDRATASE SMALL SUBUNIT 2-RELATED-RELATED"/>
    <property type="match status" value="1"/>
</dbReference>
<dbReference type="Pfam" id="PF00694">
    <property type="entry name" value="Aconitase_C"/>
    <property type="match status" value="1"/>
</dbReference>
<dbReference type="SUPFAM" id="SSF52016">
    <property type="entry name" value="LeuD/IlvD-like"/>
    <property type="match status" value="1"/>
</dbReference>
<organism>
    <name type="scientific">Wolinella succinogenes (strain ATCC 29543 / DSM 1740 / CCUG 13145 / JCM 31913 / LMG 7466 / NCTC 11488 / FDC 602W)</name>
    <name type="common">Vibrio succinogenes</name>
    <dbReference type="NCBI Taxonomy" id="273121"/>
    <lineage>
        <taxon>Bacteria</taxon>
        <taxon>Pseudomonadati</taxon>
        <taxon>Campylobacterota</taxon>
        <taxon>Epsilonproteobacteria</taxon>
        <taxon>Campylobacterales</taxon>
        <taxon>Helicobacteraceae</taxon>
        <taxon>Wolinella</taxon>
    </lineage>
</organism>
<accession>Q7M887</accession>
<proteinExistence type="inferred from homology"/>
<reference key="1">
    <citation type="journal article" date="2003" name="Proc. Natl. Acad. Sci. U.S.A.">
        <title>Complete genome sequence and analysis of Wolinella succinogenes.</title>
        <authorList>
            <person name="Baar C."/>
            <person name="Eppinger M."/>
            <person name="Raddatz G."/>
            <person name="Simon J."/>
            <person name="Lanz C."/>
            <person name="Klimmek O."/>
            <person name="Nandakumar R."/>
            <person name="Gross R."/>
            <person name="Rosinus A."/>
            <person name="Keller H."/>
            <person name="Jagtap P."/>
            <person name="Linke B."/>
            <person name="Meyer F."/>
            <person name="Lederer H."/>
            <person name="Schuster S.C."/>
        </authorList>
    </citation>
    <scope>NUCLEOTIDE SEQUENCE [LARGE SCALE GENOMIC DNA]</scope>
    <source>
        <strain>ATCC 29543 / DSM 1740 / CCUG 13145 / JCM 31913 / LMG 7466 / NCTC 11488 / FDC 602W</strain>
    </source>
</reference>
<comment type="function">
    <text evidence="1">Catalyzes the isomerization between 2-isopropylmalate and 3-isopropylmalate, via the formation of 2-isopropylmaleate.</text>
</comment>
<comment type="catalytic activity">
    <reaction evidence="1">
        <text>(2R,3S)-3-isopropylmalate = (2S)-2-isopropylmalate</text>
        <dbReference type="Rhea" id="RHEA:32287"/>
        <dbReference type="ChEBI" id="CHEBI:1178"/>
        <dbReference type="ChEBI" id="CHEBI:35121"/>
        <dbReference type="EC" id="4.2.1.33"/>
    </reaction>
</comment>
<comment type="pathway">
    <text evidence="1">Amino-acid biosynthesis; L-leucine biosynthesis; L-leucine from 3-methyl-2-oxobutanoate: step 2/4.</text>
</comment>
<comment type="subunit">
    <text evidence="1">Heterodimer of LeuC and LeuD.</text>
</comment>
<comment type="similarity">
    <text evidence="1">Belongs to the LeuD family. LeuD type 2 subfamily.</text>
</comment>
<gene>
    <name evidence="1" type="primary">leuD</name>
    <name type="synonym">leuD-1</name>
    <name type="ordered locus">WS1812</name>
</gene>